<reference key="1">
    <citation type="journal article" date="2000" name="Science">
        <title>Complete genome sequence of Neisseria meningitidis serogroup B strain MC58.</title>
        <authorList>
            <person name="Tettelin H."/>
            <person name="Saunders N.J."/>
            <person name="Heidelberg J.F."/>
            <person name="Jeffries A.C."/>
            <person name="Nelson K.E."/>
            <person name="Eisen J.A."/>
            <person name="Ketchum K.A."/>
            <person name="Hood D.W."/>
            <person name="Peden J.F."/>
            <person name="Dodson R.J."/>
            <person name="Nelson W.C."/>
            <person name="Gwinn M.L."/>
            <person name="DeBoy R.T."/>
            <person name="Peterson J.D."/>
            <person name="Hickey E.K."/>
            <person name="Haft D.H."/>
            <person name="Salzberg S.L."/>
            <person name="White O."/>
            <person name="Fleischmann R.D."/>
            <person name="Dougherty B.A."/>
            <person name="Mason T.M."/>
            <person name="Ciecko A."/>
            <person name="Parksey D.S."/>
            <person name="Blair E."/>
            <person name="Cittone H."/>
            <person name="Clark E.B."/>
            <person name="Cotton M.D."/>
            <person name="Utterback T.R."/>
            <person name="Khouri H.M."/>
            <person name="Qin H."/>
            <person name="Vamathevan J.J."/>
            <person name="Gill J."/>
            <person name="Scarlato V."/>
            <person name="Masignani V."/>
            <person name="Pizza M."/>
            <person name="Grandi G."/>
            <person name="Sun L."/>
            <person name="Smith H.O."/>
            <person name="Fraser C.M."/>
            <person name="Moxon E.R."/>
            <person name="Rappuoli R."/>
            <person name="Venter J.C."/>
        </authorList>
    </citation>
    <scope>NUCLEOTIDE SEQUENCE [LARGE SCALE GENOMIC DNA]</scope>
    <source>
        <strain>ATCC BAA-335 / MC58</strain>
    </source>
</reference>
<reference key="2">
    <citation type="journal article" date="2006" name="Proteomics">
        <title>Proteomic analysis of a meningococcal outer membrane vesicle vaccine prepared from the group B strain NZ98/254.</title>
        <authorList>
            <person name="Vipond C."/>
            <person name="Suker J."/>
            <person name="Jones C."/>
            <person name="Tang C."/>
            <person name="Feavers I.M."/>
            <person name="Wheeler J.X."/>
        </authorList>
    </citation>
    <scope>IDENTIFICATION BY MASS SPECTROMETRY [LARGE SCALE ANALYSIS]</scope>
    <source>
        <strain>NZ98/254 / Serogroup B</strain>
    </source>
</reference>
<dbReference type="EMBL" id="AE002098">
    <property type="protein sequence ID" value="AAF41335.1"/>
    <property type="molecule type" value="Genomic_DNA"/>
</dbReference>
<dbReference type="PIR" id="C81141">
    <property type="entry name" value="C81141"/>
</dbReference>
<dbReference type="RefSeq" id="NP_273967.1">
    <property type="nucleotide sequence ID" value="NC_003112.2"/>
</dbReference>
<dbReference type="STRING" id="122586.NMB0928"/>
<dbReference type="PaxDb" id="122586-NMB0928"/>
<dbReference type="KEGG" id="nme:NMB0928"/>
<dbReference type="PATRIC" id="fig|122586.8.peg.1177"/>
<dbReference type="HOGENOM" id="CLU_056157_0_0_4"/>
<dbReference type="InParanoid" id="Q9JZR5"/>
<dbReference type="OrthoDB" id="5291099at2"/>
<dbReference type="Proteomes" id="UP000000425">
    <property type="component" value="Chromosome"/>
</dbReference>
<dbReference type="Gene3D" id="3.30.310.170">
    <property type="entry name" value="Outer membrane protein assembly factor BamC"/>
    <property type="match status" value="1"/>
</dbReference>
<dbReference type="InterPro" id="IPR042268">
    <property type="entry name" value="BamC_C"/>
</dbReference>
<dbReference type="InterPro" id="IPR010653">
    <property type="entry name" value="NlpB/DapX"/>
</dbReference>
<dbReference type="Pfam" id="PF06804">
    <property type="entry name" value="Lipoprotein_18"/>
    <property type="match status" value="1"/>
</dbReference>
<keyword id="KW-1185">Reference proteome</keyword>
<sequence length="398" mass="43815">MPSEPFGRHNATNTLISITQDDTMTHIKPVIAALALIGLAACSGSKTEQPKLDYQSRSHRLIKLEVPPDLNNPDQGNLYRLPAGSGAVRASDLEKRRTPAVQQPADAEVLKSVKGVRLERDGSQRWLVVDGKSPAEIWPLLKAFWQENGFDIKSEEPAIGQMETEWAENRAKIPQDSLRRLFDKVGLGGIYSTGERDKFIVRIEQGKNGVSDIFFAHKAMKEVYGGKDKDTTVWQPSPSDPNLEAAFLTRFMQYLGVDGQQAENASAKKPTLPAANEMARIEGKSLIVFGDYGRNWRRTVLALDRIGLTVVGQNTERHAFLVQKAPNESNAVTEQKPGLFKRLLGKGKAEKPAEQPELIVYAEPVANGSRIVLLNKDGSAYAGKDASALLGKLHSELR</sequence>
<name>Y928_NEIMB</name>
<comment type="miscellaneous">
    <text>Present in outer membrane vesicle formulations which are used as vaccines in human.</text>
</comment>
<gene>
    <name type="ordered locus">NMB0928</name>
</gene>
<accession>Q9JZR5</accession>
<organism>
    <name type="scientific">Neisseria meningitidis serogroup B (strain ATCC BAA-335 / MC58)</name>
    <dbReference type="NCBI Taxonomy" id="122586"/>
    <lineage>
        <taxon>Bacteria</taxon>
        <taxon>Pseudomonadati</taxon>
        <taxon>Pseudomonadota</taxon>
        <taxon>Betaproteobacteria</taxon>
        <taxon>Neisseriales</taxon>
        <taxon>Neisseriaceae</taxon>
        <taxon>Neisseria</taxon>
    </lineage>
</organism>
<protein>
    <recommendedName>
        <fullName>Uncharacterized protein NMB0928</fullName>
    </recommendedName>
</protein>
<feature type="chain" id="PRO_0000320330" description="Uncharacterized protein NMB0928">
    <location>
        <begin position="1"/>
        <end position="398"/>
    </location>
</feature>
<proteinExistence type="evidence at protein level"/>